<keyword id="KW-1003">Cell membrane</keyword>
<keyword id="KW-0325">Glycoprotein</keyword>
<keyword id="KW-0391">Immunity</keyword>
<keyword id="KW-0472">Membrane</keyword>
<keyword id="KW-0490">MHC I</keyword>
<keyword id="KW-1185">Reference proteome</keyword>
<keyword id="KW-0812">Transmembrane</keyword>
<keyword id="KW-1133">Transmembrane helix</keyword>
<dbReference type="EMBL" id="J00407">
    <property type="protein sequence ID" value="AAA39698.1"/>
    <property type="molecule type" value="mRNA"/>
</dbReference>
<dbReference type="PIR" id="A02195">
    <property type="entry name" value="HLMS2"/>
</dbReference>
<dbReference type="SMR" id="P01896"/>
<dbReference type="GlyGen" id="P01896">
    <property type="glycosylation" value="2 sites"/>
</dbReference>
<dbReference type="jPOST" id="P01896"/>
<dbReference type="PeptideAtlas" id="P01896"/>
<dbReference type="UCSC" id="uc008chh.1">
    <property type="organism name" value="mouse"/>
</dbReference>
<dbReference type="InParanoid" id="P01896"/>
<dbReference type="Proteomes" id="UP000000589">
    <property type="component" value="Unplaced"/>
</dbReference>
<dbReference type="RNAct" id="P01896">
    <property type="molecule type" value="protein"/>
</dbReference>
<dbReference type="GO" id="GO:0098553">
    <property type="term" value="C:lumenal side of endoplasmic reticulum membrane"/>
    <property type="evidence" value="ECO:0000304"/>
    <property type="project" value="Reactome"/>
</dbReference>
<dbReference type="GO" id="GO:0042612">
    <property type="term" value="C:MHC class I protein complex"/>
    <property type="evidence" value="ECO:0007669"/>
    <property type="project" value="UniProtKB-KW"/>
</dbReference>
<dbReference type="GO" id="GO:0030670">
    <property type="term" value="C:phagocytic vesicle membrane"/>
    <property type="evidence" value="ECO:0000304"/>
    <property type="project" value="Reactome"/>
</dbReference>
<dbReference type="GO" id="GO:0002474">
    <property type="term" value="P:antigen processing and presentation of peptide antigen via MHC class I"/>
    <property type="evidence" value="ECO:0007669"/>
    <property type="project" value="UniProtKB-KW"/>
</dbReference>
<dbReference type="GO" id="GO:0006955">
    <property type="term" value="P:immune response"/>
    <property type="evidence" value="ECO:0007669"/>
    <property type="project" value="InterPro"/>
</dbReference>
<dbReference type="CDD" id="cd12087">
    <property type="entry name" value="TM_EGFR-like"/>
    <property type="match status" value="1"/>
</dbReference>
<dbReference type="FunFam" id="2.60.40.10:FF:000014">
    <property type="entry name" value="H-2 class I histocompatibility antigen, alpha chain"/>
    <property type="match status" value="1"/>
</dbReference>
<dbReference type="Gene3D" id="2.60.40.10">
    <property type="entry name" value="Immunoglobulins"/>
    <property type="match status" value="1"/>
</dbReference>
<dbReference type="InterPro" id="IPR007110">
    <property type="entry name" value="Ig-like_dom"/>
</dbReference>
<dbReference type="InterPro" id="IPR036179">
    <property type="entry name" value="Ig-like_dom_sf"/>
</dbReference>
<dbReference type="InterPro" id="IPR013783">
    <property type="entry name" value="Ig-like_fold"/>
</dbReference>
<dbReference type="InterPro" id="IPR003006">
    <property type="entry name" value="Ig/MHC_CS"/>
</dbReference>
<dbReference type="InterPro" id="IPR003597">
    <property type="entry name" value="Ig_C1-set"/>
</dbReference>
<dbReference type="InterPro" id="IPR050208">
    <property type="entry name" value="MHC_class-I_related"/>
</dbReference>
<dbReference type="InterPro" id="IPR010579">
    <property type="entry name" value="MHC_I_a_C"/>
</dbReference>
<dbReference type="PANTHER" id="PTHR16675:SF251">
    <property type="entry name" value="HLA CLASS I HISTOCOMPATIBILITY ANTIGEN, C ALPHA CHAIN"/>
    <property type="match status" value="1"/>
</dbReference>
<dbReference type="PANTHER" id="PTHR16675">
    <property type="entry name" value="MHC CLASS I-RELATED"/>
    <property type="match status" value="1"/>
</dbReference>
<dbReference type="Pfam" id="PF07654">
    <property type="entry name" value="C1-set"/>
    <property type="match status" value="1"/>
</dbReference>
<dbReference type="Pfam" id="PF06623">
    <property type="entry name" value="MHC_I_C"/>
    <property type="match status" value="1"/>
</dbReference>
<dbReference type="SMART" id="SM00407">
    <property type="entry name" value="IGc1"/>
    <property type="match status" value="1"/>
</dbReference>
<dbReference type="SUPFAM" id="SSF48726">
    <property type="entry name" value="Immunoglobulin"/>
    <property type="match status" value="1"/>
</dbReference>
<dbReference type="PROSITE" id="PS50835">
    <property type="entry name" value="IG_LIKE"/>
    <property type="match status" value="1"/>
</dbReference>
<dbReference type="PROSITE" id="PS00290">
    <property type="entry name" value="IG_MHC"/>
    <property type="match status" value="1"/>
</dbReference>
<protein>
    <recommendedName>
        <fullName>H-2 class I histocompatibility antigen, alpha chain</fullName>
    </recommendedName>
    <alternativeName>
        <fullName>Clone PH-2D-2</fullName>
    </alternativeName>
</protein>
<accession>P01896</accession>
<accession>Q31209</accession>
<proteinExistence type="evidence at transcript level"/>
<evidence type="ECO:0000250" key="1"/>
<evidence type="ECO:0000255" key="2"/>
<evidence type="ECO:0000305" key="3"/>
<feature type="chain" id="PRO_0000080743" description="H-2 class I histocompatibility antigen, alpha chain">
    <location>
        <begin position="1" status="less than"/>
        <end position="185"/>
    </location>
</feature>
<feature type="topological domain" description="Extracellular" evidence="2">
    <location>
        <begin position="1" status="less than"/>
        <end position="118"/>
    </location>
</feature>
<feature type="transmembrane region" description="Helical" evidence="2">
    <location>
        <begin position="119"/>
        <end position="139"/>
    </location>
</feature>
<feature type="topological domain" description="Cytoplasmic" evidence="2">
    <location>
        <begin position="140"/>
        <end position="185"/>
    </location>
</feature>
<feature type="domain" description="Ig-like C1-type">
    <location>
        <begin position="19"/>
        <end position="107"/>
    </location>
</feature>
<feature type="glycosylation site" description="N-linked (GlcNAc...) asparagine" evidence="2">
    <location>
        <position position="10"/>
    </location>
</feature>
<feature type="glycosylation site" description="N-linked (GlcNAc...) asparagine" evidence="2">
    <location>
        <position position="90"/>
    </location>
</feature>
<feature type="sequence conflict" description="In Ref. 1; AAA39698." evidence="3" ref="1">
    <original>G</original>
    <variation>A</variation>
    <location>
        <position position="149"/>
    </location>
</feature>
<feature type="non-terminal residue">
    <location>
        <position position="1"/>
    </location>
</feature>
<name>HA1Z_MOUSE</name>
<reference key="1">
    <citation type="journal article" date="1981" name="Cell">
        <title>Three cDNA clones encoding mouse transplantation antigens: homology to immunoglobulin genes.</title>
        <authorList>
            <person name="Steinmetz M."/>
            <person name="Frelinger J.G."/>
            <person name="Fisher D."/>
            <person name="Hunkapiller T."/>
            <person name="Pereira D."/>
            <person name="Weissman S.M."/>
            <person name="Uehara H."/>
            <person name="Nathenson S.G."/>
            <person name="Hood L.E."/>
        </authorList>
    </citation>
    <scope>NUCLEOTIDE SEQUENCE</scope>
</reference>
<sequence>WLHRYLKNGNATLLRTDPPKAHVTHHRRPEGDVTLRCWALGFYPADITLTWQLNGEELTQDMELVETRPAGDGTFQKWASVVVPLGKEQNYTCRVYHEGLPEPLTLRWEPPPSTDSYMVIVAVLGVLGAMAIIGAVVAFVMKRRRNTGGKGGDYALAPGSQSSEMSLRDCKGDTLGSDWGGAMWT</sequence>
<organism>
    <name type="scientific">Mus musculus</name>
    <name type="common">Mouse</name>
    <dbReference type="NCBI Taxonomy" id="10090"/>
    <lineage>
        <taxon>Eukaryota</taxon>
        <taxon>Metazoa</taxon>
        <taxon>Chordata</taxon>
        <taxon>Craniata</taxon>
        <taxon>Vertebrata</taxon>
        <taxon>Euteleostomi</taxon>
        <taxon>Mammalia</taxon>
        <taxon>Eutheria</taxon>
        <taxon>Euarchontoglires</taxon>
        <taxon>Glires</taxon>
        <taxon>Rodentia</taxon>
        <taxon>Myomorpha</taxon>
        <taxon>Muroidea</taxon>
        <taxon>Muridae</taxon>
        <taxon>Murinae</taxon>
        <taxon>Mus</taxon>
        <taxon>Mus</taxon>
    </lineage>
</organism>
<comment type="function">
    <text>Involved in the presentation of foreign antigens to the immune system.</text>
</comment>
<comment type="subunit">
    <text>Heterodimer of an alpha chain and a beta chain (beta-2-microglobulin).</text>
</comment>
<comment type="subcellular location">
    <subcellularLocation>
        <location evidence="1">Cell membrane</location>
        <topology evidence="1">Single-pass membrane protein</topology>
    </subcellularLocation>
</comment>
<comment type="miscellaneous">
    <text>Sequences of three cDNA clones that encode portions of three distinct histocompatibility antigen alpha chains are presented. These chains could not be precisely identified.</text>
</comment>
<comment type="similarity">
    <text evidence="3">Belongs to the MHC class I family.</text>
</comment>